<organism>
    <name type="scientific">Yersinia pestis bv. Antiqua (strain Antiqua)</name>
    <dbReference type="NCBI Taxonomy" id="360102"/>
    <lineage>
        <taxon>Bacteria</taxon>
        <taxon>Pseudomonadati</taxon>
        <taxon>Pseudomonadota</taxon>
        <taxon>Gammaproteobacteria</taxon>
        <taxon>Enterobacterales</taxon>
        <taxon>Yersiniaceae</taxon>
        <taxon>Yersinia</taxon>
    </lineage>
</organism>
<sequence>MHCPFCAAVDTKVIDSRLVSDGSQVRRRRQCLDCNERFTTFEVAELVLPRVIKSDEVREPFNEEKLRRGMLKALEKRPVSSDDVETAISHIKSQLRATGEREVPTKMVGNLVMEALKRLDKVAYIRFASVYRSFEDVREFGEEIARLQD</sequence>
<keyword id="KW-0067">ATP-binding</keyword>
<keyword id="KW-0238">DNA-binding</keyword>
<keyword id="KW-0479">Metal-binding</keyword>
<keyword id="KW-0547">Nucleotide-binding</keyword>
<keyword id="KW-0678">Repressor</keyword>
<keyword id="KW-0804">Transcription</keyword>
<keyword id="KW-0805">Transcription regulation</keyword>
<keyword id="KW-0862">Zinc</keyword>
<keyword id="KW-0863">Zinc-finger</keyword>
<gene>
    <name evidence="1" type="primary">nrdR</name>
    <name type="ordered locus">YPA_2678</name>
</gene>
<evidence type="ECO:0000255" key="1">
    <source>
        <dbReference type="HAMAP-Rule" id="MF_00440"/>
    </source>
</evidence>
<reference key="1">
    <citation type="journal article" date="2006" name="J. Bacteriol.">
        <title>Complete genome sequence of Yersinia pestis strains Antiqua and Nepal516: evidence of gene reduction in an emerging pathogen.</title>
        <authorList>
            <person name="Chain P.S.G."/>
            <person name="Hu P."/>
            <person name="Malfatti S.A."/>
            <person name="Radnedge L."/>
            <person name="Larimer F."/>
            <person name="Vergez L.M."/>
            <person name="Worsham P."/>
            <person name="Chu M.C."/>
            <person name="Andersen G.L."/>
        </authorList>
    </citation>
    <scope>NUCLEOTIDE SEQUENCE [LARGE SCALE GENOMIC DNA]</scope>
    <source>
        <strain>Antiqua</strain>
    </source>
</reference>
<name>NRDR_YERPA</name>
<accession>Q1C4I2</accession>
<comment type="function">
    <text evidence="1">Negatively regulates transcription of bacterial ribonucleotide reductase nrd genes and operons by binding to NrdR-boxes.</text>
</comment>
<comment type="cofactor">
    <cofactor evidence="1">
        <name>Zn(2+)</name>
        <dbReference type="ChEBI" id="CHEBI:29105"/>
    </cofactor>
    <text evidence="1">Binds 1 zinc ion.</text>
</comment>
<comment type="similarity">
    <text evidence="1">Belongs to the NrdR family.</text>
</comment>
<proteinExistence type="inferred from homology"/>
<feature type="chain" id="PRO_0000264230" description="Transcriptional repressor NrdR">
    <location>
        <begin position="1"/>
        <end position="149"/>
    </location>
</feature>
<feature type="domain" description="ATP-cone" evidence="1">
    <location>
        <begin position="49"/>
        <end position="139"/>
    </location>
</feature>
<feature type="zinc finger region" evidence="1">
    <location>
        <begin position="3"/>
        <end position="34"/>
    </location>
</feature>
<dbReference type="EMBL" id="CP000308">
    <property type="protein sequence ID" value="ABG14640.1"/>
    <property type="molecule type" value="Genomic_DNA"/>
</dbReference>
<dbReference type="RefSeq" id="WP_002208668.1">
    <property type="nucleotide sequence ID" value="NZ_CP009906.1"/>
</dbReference>
<dbReference type="SMR" id="Q1C4I2"/>
<dbReference type="GeneID" id="57975529"/>
<dbReference type="KEGG" id="ypa:YPA_2678"/>
<dbReference type="Proteomes" id="UP000001971">
    <property type="component" value="Chromosome"/>
</dbReference>
<dbReference type="GO" id="GO:0005524">
    <property type="term" value="F:ATP binding"/>
    <property type="evidence" value="ECO:0007669"/>
    <property type="project" value="UniProtKB-KW"/>
</dbReference>
<dbReference type="GO" id="GO:0003677">
    <property type="term" value="F:DNA binding"/>
    <property type="evidence" value="ECO:0007669"/>
    <property type="project" value="UniProtKB-KW"/>
</dbReference>
<dbReference type="GO" id="GO:0008270">
    <property type="term" value="F:zinc ion binding"/>
    <property type="evidence" value="ECO:0007669"/>
    <property type="project" value="UniProtKB-UniRule"/>
</dbReference>
<dbReference type="GO" id="GO:0045892">
    <property type="term" value="P:negative regulation of DNA-templated transcription"/>
    <property type="evidence" value="ECO:0007669"/>
    <property type="project" value="UniProtKB-UniRule"/>
</dbReference>
<dbReference type="HAMAP" id="MF_00440">
    <property type="entry name" value="NrdR"/>
    <property type="match status" value="1"/>
</dbReference>
<dbReference type="InterPro" id="IPR005144">
    <property type="entry name" value="ATP-cone_dom"/>
</dbReference>
<dbReference type="InterPro" id="IPR055173">
    <property type="entry name" value="NrdR-like_N"/>
</dbReference>
<dbReference type="InterPro" id="IPR003796">
    <property type="entry name" value="RNR_NrdR-like"/>
</dbReference>
<dbReference type="NCBIfam" id="TIGR00244">
    <property type="entry name" value="transcriptional regulator NrdR"/>
    <property type="match status" value="1"/>
</dbReference>
<dbReference type="PANTHER" id="PTHR30455">
    <property type="entry name" value="TRANSCRIPTIONAL REPRESSOR NRDR"/>
    <property type="match status" value="1"/>
</dbReference>
<dbReference type="PANTHER" id="PTHR30455:SF2">
    <property type="entry name" value="TRANSCRIPTIONAL REPRESSOR NRDR"/>
    <property type="match status" value="1"/>
</dbReference>
<dbReference type="Pfam" id="PF03477">
    <property type="entry name" value="ATP-cone"/>
    <property type="match status" value="1"/>
</dbReference>
<dbReference type="Pfam" id="PF22811">
    <property type="entry name" value="Zn_ribbon_NrdR"/>
    <property type="match status" value="1"/>
</dbReference>
<dbReference type="PROSITE" id="PS51161">
    <property type="entry name" value="ATP_CONE"/>
    <property type="match status" value="1"/>
</dbReference>
<protein>
    <recommendedName>
        <fullName evidence="1">Transcriptional repressor NrdR</fullName>
    </recommendedName>
</protein>